<sequence length="167" mass="19119">MSTLLWLLSFMLHGVLLYAVIILYTRLAAVKETEKQQKQILEETENTLAAFLLELKEENEKLIENKASSASQSDEESQKSGLQTSETYQERDPVQEAENLPEHIEGLITEVDRREELVNSEVQSFEDQVIELYEQGYSASQIAQKMKSGKTEIELFLKFRSKGVKDS</sequence>
<keyword id="KW-1185">Reference proteome</keyword>
<reference key="1">
    <citation type="journal article" date="1997" name="Nature">
        <title>The complete genome sequence of the Gram-positive bacterium Bacillus subtilis.</title>
        <authorList>
            <person name="Kunst F."/>
            <person name="Ogasawara N."/>
            <person name="Moszer I."/>
            <person name="Albertini A.M."/>
            <person name="Alloni G."/>
            <person name="Azevedo V."/>
            <person name="Bertero M.G."/>
            <person name="Bessieres P."/>
            <person name="Bolotin A."/>
            <person name="Borchert S."/>
            <person name="Borriss R."/>
            <person name="Boursier L."/>
            <person name="Brans A."/>
            <person name="Braun M."/>
            <person name="Brignell S.C."/>
            <person name="Bron S."/>
            <person name="Brouillet S."/>
            <person name="Bruschi C.V."/>
            <person name="Caldwell B."/>
            <person name="Capuano V."/>
            <person name="Carter N.M."/>
            <person name="Choi S.-K."/>
            <person name="Codani J.-J."/>
            <person name="Connerton I.F."/>
            <person name="Cummings N.J."/>
            <person name="Daniel R.A."/>
            <person name="Denizot F."/>
            <person name="Devine K.M."/>
            <person name="Duesterhoeft A."/>
            <person name="Ehrlich S.D."/>
            <person name="Emmerson P.T."/>
            <person name="Entian K.-D."/>
            <person name="Errington J."/>
            <person name="Fabret C."/>
            <person name="Ferrari E."/>
            <person name="Foulger D."/>
            <person name="Fritz C."/>
            <person name="Fujita M."/>
            <person name="Fujita Y."/>
            <person name="Fuma S."/>
            <person name="Galizzi A."/>
            <person name="Galleron N."/>
            <person name="Ghim S.-Y."/>
            <person name="Glaser P."/>
            <person name="Goffeau A."/>
            <person name="Golightly E.J."/>
            <person name="Grandi G."/>
            <person name="Guiseppi G."/>
            <person name="Guy B.J."/>
            <person name="Haga K."/>
            <person name="Haiech J."/>
            <person name="Harwood C.R."/>
            <person name="Henaut A."/>
            <person name="Hilbert H."/>
            <person name="Holsappel S."/>
            <person name="Hosono S."/>
            <person name="Hullo M.-F."/>
            <person name="Itaya M."/>
            <person name="Jones L.-M."/>
            <person name="Joris B."/>
            <person name="Karamata D."/>
            <person name="Kasahara Y."/>
            <person name="Klaerr-Blanchard M."/>
            <person name="Klein C."/>
            <person name="Kobayashi Y."/>
            <person name="Koetter P."/>
            <person name="Koningstein G."/>
            <person name="Krogh S."/>
            <person name="Kumano M."/>
            <person name="Kurita K."/>
            <person name="Lapidus A."/>
            <person name="Lardinois S."/>
            <person name="Lauber J."/>
            <person name="Lazarevic V."/>
            <person name="Lee S.-M."/>
            <person name="Levine A."/>
            <person name="Liu H."/>
            <person name="Masuda S."/>
            <person name="Mauel C."/>
            <person name="Medigue C."/>
            <person name="Medina N."/>
            <person name="Mellado R.P."/>
            <person name="Mizuno M."/>
            <person name="Moestl D."/>
            <person name="Nakai S."/>
            <person name="Noback M."/>
            <person name="Noone D."/>
            <person name="O'Reilly M."/>
            <person name="Ogawa K."/>
            <person name="Ogiwara A."/>
            <person name="Oudega B."/>
            <person name="Park S.-H."/>
            <person name="Parro V."/>
            <person name="Pohl T.M."/>
            <person name="Portetelle D."/>
            <person name="Porwollik S."/>
            <person name="Prescott A.M."/>
            <person name="Presecan E."/>
            <person name="Pujic P."/>
            <person name="Purnelle B."/>
            <person name="Rapoport G."/>
            <person name="Rey M."/>
            <person name="Reynolds S."/>
            <person name="Rieger M."/>
            <person name="Rivolta C."/>
            <person name="Rocha E."/>
            <person name="Roche B."/>
            <person name="Rose M."/>
            <person name="Sadaie Y."/>
            <person name="Sato T."/>
            <person name="Scanlan E."/>
            <person name="Schleich S."/>
            <person name="Schroeter R."/>
            <person name="Scoffone F."/>
            <person name="Sekiguchi J."/>
            <person name="Sekowska A."/>
            <person name="Seror S.J."/>
            <person name="Serror P."/>
            <person name="Shin B.-S."/>
            <person name="Soldo B."/>
            <person name="Sorokin A."/>
            <person name="Tacconi E."/>
            <person name="Takagi T."/>
            <person name="Takahashi H."/>
            <person name="Takemaru K."/>
            <person name="Takeuchi M."/>
            <person name="Tamakoshi A."/>
            <person name="Tanaka T."/>
            <person name="Terpstra P."/>
            <person name="Tognoni A."/>
            <person name="Tosato V."/>
            <person name="Uchiyama S."/>
            <person name="Vandenbol M."/>
            <person name="Vannier F."/>
            <person name="Vassarotti A."/>
            <person name="Viari A."/>
            <person name="Wambutt R."/>
            <person name="Wedler E."/>
            <person name="Wedler H."/>
            <person name="Weitzenegger T."/>
            <person name="Winters P."/>
            <person name="Wipat A."/>
            <person name="Yamamoto H."/>
            <person name="Yamane K."/>
            <person name="Yasumoto K."/>
            <person name="Yata K."/>
            <person name="Yoshida K."/>
            <person name="Yoshikawa H.-F."/>
            <person name="Zumstein E."/>
            <person name="Yoshikawa H."/>
            <person name="Danchin A."/>
        </authorList>
    </citation>
    <scope>NUCLEOTIDE SEQUENCE [LARGE SCALE GENOMIC DNA]</scope>
    <source>
        <strain>168</strain>
    </source>
</reference>
<reference key="2">
    <citation type="journal article" date="1988" name="J. Bacteriol.">
        <title>Cloning, sequencing, and disruption of the Bacillus subtilis sigma 28 gene.</title>
        <authorList>
            <person name="Helmann J.D."/>
            <person name="Marquez L.M."/>
            <person name="Chamberlin M.J."/>
        </authorList>
    </citation>
    <scope>NUCLEOTIDE SEQUENCE [GENOMIC DNA] OF 1-67</scope>
</reference>
<reference key="3">
    <citation type="journal article" date="2004" name="J. Bacteriol.">
        <title>The last gene of the fla/che operon in Bacillus subtilis, ylxL, is required for maximal sigmaD function.</title>
        <authorList>
            <person name="Werhane H."/>
            <person name="Lopez P."/>
            <person name="Mendel M."/>
            <person name="Zimmer M."/>
            <person name="Ordal G.W."/>
            <person name="Marquez-Magana L.M."/>
        </authorList>
    </citation>
    <scope>FUNCTION RELATED TO SIGMA-D</scope>
</reference>
<reference key="4">
    <citation type="journal article" date="2004" name="Mol. Microbiol.">
        <title>Genes governing swarming in Bacillus subtilis and evidence for a phase variation mechanism controlling surface motility.</title>
        <authorList>
            <person name="Kearns D.B."/>
            <person name="Chu F."/>
            <person name="Rudner R."/>
            <person name="Losick R."/>
        </authorList>
    </citation>
    <scope>ROLE IN SWARMING MOTILITY</scope>
    <source>
        <strain>168</strain>
        <strain>168 / PY79</strain>
        <strain>3610</strain>
    </source>
</reference>
<dbReference type="EMBL" id="AL009126">
    <property type="protein sequence ID" value="CAB13521.1"/>
    <property type="molecule type" value="Genomic_DNA"/>
</dbReference>
<dbReference type="EMBL" id="M20144">
    <property type="status" value="NOT_ANNOTATED_CDS"/>
    <property type="molecule type" value="Genomic_DNA"/>
</dbReference>
<dbReference type="PIR" id="H69881">
    <property type="entry name" value="H69881"/>
</dbReference>
<dbReference type="RefSeq" id="NP_389530.1">
    <property type="nucleotide sequence ID" value="NC_000964.3"/>
</dbReference>
<dbReference type="RefSeq" id="WP_009967248.1">
    <property type="nucleotide sequence ID" value="NZ_OZ025638.1"/>
</dbReference>
<dbReference type="SMR" id="P40405"/>
<dbReference type="FunCoup" id="P40405">
    <property type="interactions" value="22"/>
</dbReference>
<dbReference type="STRING" id="224308.BSU16480"/>
<dbReference type="PaxDb" id="224308-BSU16480"/>
<dbReference type="DNASU" id="939618"/>
<dbReference type="EnsemblBacteria" id="CAB13521">
    <property type="protein sequence ID" value="CAB13521"/>
    <property type="gene ID" value="BSU_16480"/>
</dbReference>
<dbReference type="GeneID" id="939618"/>
<dbReference type="KEGG" id="bsu:BSU16480"/>
<dbReference type="PATRIC" id="fig|224308.179.peg.1789"/>
<dbReference type="eggNOG" id="ENOG5032TJF">
    <property type="taxonomic scope" value="Bacteria"/>
</dbReference>
<dbReference type="InParanoid" id="P40405"/>
<dbReference type="OrthoDB" id="1708317at2"/>
<dbReference type="BioCyc" id="BSUB:BSU16480-MONOMER"/>
<dbReference type="Proteomes" id="UP000001570">
    <property type="component" value="Chromosome"/>
</dbReference>
<dbReference type="GO" id="GO:0071978">
    <property type="term" value="P:bacterial-type flagellum-dependent swarming motility"/>
    <property type="evidence" value="ECO:0000315"/>
    <property type="project" value="CACAO"/>
</dbReference>
<organism>
    <name type="scientific">Bacillus subtilis (strain 168)</name>
    <dbReference type="NCBI Taxonomy" id="224308"/>
    <lineage>
        <taxon>Bacteria</taxon>
        <taxon>Bacillati</taxon>
        <taxon>Bacillota</taxon>
        <taxon>Bacilli</taxon>
        <taxon>Bacillales</taxon>
        <taxon>Bacillaceae</taxon>
        <taxon>Bacillus</taxon>
    </lineage>
</organism>
<evidence type="ECO:0000256" key="1">
    <source>
        <dbReference type="SAM" id="MobiDB-lite"/>
    </source>
</evidence>
<evidence type="ECO:0000269" key="2">
    <source>
    </source>
</evidence>
<evidence type="ECO:0000269" key="3">
    <source>
    </source>
</evidence>
<proteinExistence type="predicted"/>
<feature type="chain" id="PRO_0000072354" description="Swarming motility protein SwrB">
    <location>
        <begin position="1"/>
        <end position="167"/>
    </location>
</feature>
<feature type="region of interest" description="Disordered" evidence="1">
    <location>
        <begin position="63"/>
        <end position="105"/>
    </location>
</feature>
<feature type="compositionally biased region" description="Basic and acidic residues" evidence="1">
    <location>
        <begin position="88"/>
        <end position="105"/>
    </location>
</feature>
<name>SWRB_BACSU</name>
<accession>P40405</accession>
<comment type="function">
    <text evidence="2 3">Required for swarming motility and for maximal sigma-D activity.</text>
</comment>
<protein>
    <recommendedName>
        <fullName>Swarming motility protein SwrB</fullName>
    </recommendedName>
</protein>
<gene>
    <name type="primary">swrB</name>
    <name type="ordered locus">BSU16480</name>
</gene>